<organism>
    <name type="scientific">Methanopyrus kandleri (strain AV19 / DSM 6324 / JCM 9639 / NBRC 100938)</name>
    <dbReference type="NCBI Taxonomy" id="190192"/>
    <lineage>
        <taxon>Archaea</taxon>
        <taxon>Methanobacteriati</taxon>
        <taxon>Methanobacteriota</taxon>
        <taxon>Methanomada group</taxon>
        <taxon>Methanopyri</taxon>
        <taxon>Methanopyrales</taxon>
        <taxon>Methanopyraceae</taxon>
        <taxon>Methanopyrus</taxon>
    </lineage>
</organism>
<protein>
    <recommendedName>
        <fullName evidence="1">Small ribosomal subunit protein eS17</fullName>
    </recommendedName>
    <alternativeName>
        <fullName evidence="2">30S ribosomal protein S17e</fullName>
    </alternativeName>
</protein>
<feature type="chain" id="PRO_0000141554" description="Small ribosomal subunit protein eS17">
    <location>
        <begin position="1"/>
        <end position="70"/>
    </location>
</feature>
<comment type="similarity">
    <text evidence="1">Belongs to the eukaryotic ribosomal protein eS17 family.</text>
</comment>
<gene>
    <name evidence="1" type="primary">rps17e</name>
    <name type="ordered locus">MK1608</name>
</gene>
<accession>Q8TUZ3</accession>
<proteinExistence type="inferred from homology"/>
<evidence type="ECO:0000255" key="1">
    <source>
        <dbReference type="HAMAP-Rule" id="MF_00511"/>
    </source>
</evidence>
<evidence type="ECO:0000305" key="2"/>
<reference key="1">
    <citation type="journal article" date="2002" name="Proc. Natl. Acad. Sci. U.S.A.">
        <title>The complete genome of hyperthermophile Methanopyrus kandleri AV19 and monophyly of archaeal methanogens.</title>
        <authorList>
            <person name="Slesarev A.I."/>
            <person name="Mezhevaya K.V."/>
            <person name="Makarova K.S."/>
            <person name="Polushin N.N."/>
            <person name="Shcherbinina O.V."/>
            <person name="Shakhova V.V."/>
            <person name="Belova G.I."/>
            <person name="Aravind L."/>
            <person name="Natale D.A."/>
            <person name="Rogozin I.B."/>
            <person name="Tatusov R.L."/>
            <person name="Wolf Y.I."/>
            <person name="Stetter K.O."/>
            <person name="Malykh A.G."/>
            <person name="Koonin E.V."/>
            <person name="Kozyavkin S.A."/>
        </authorList>
    </citation>
    <scope>NUCLEOTIDE SEQUENCE [LARGE SCALE GENOMIC DNA]</scope>
    <source>
        <strain>AV19 / DSM 6324 / JCM 9639 / NBRC 100938</strain>
    </source>
</reference>
<keyword id="KW-1185">Reference proteome</keyword>
<keyword id="KW-0687">Ribonucleoprotein</keyword>
<keyword id="KW-0689">Ribosomal protein</keyword>
<name>RS17E_METKA</name>
<sequence length="70" mass="8404">MGKVRPTFVKRPAREIVEKYEEYLTTDFEHNKKVVEIVARPKTKKLRNMIAGYVTHLMRLKERQREEGTE</sequence>
<dbReference type="EMBL" id="AE009439">
    <property type="protein sequence ID" value="AAM02821.1"/>
    <property type="molecule type" value="Genomic_DNA"/>
</dbReference>
<dbReference type="RefSeq" id="WP_011019976.1">
    <property type="nucleotide sequence ID" value="NC_003551.1"/>
</dbReference>
<dbReference type="SMR" id="Q8TUZ3"/>
<dbReference type="FunCoup" id="Q8TUZ3">
    <property type="interactions" value="59"/>
</dbReference>
<dbReference type="STRING" id="190192.MK1608"/>
<dbReference type="PaxDb" id="190192-MK1608"/>
<dbReference type="EnsemblBacteria" id="AAM02821">
    <property type="protein sequence ID" value="AAM02821"/>
    <property type="gene ID" value="MK1608"/>
</dbReference>
<dbReference type="GeneID" id="1478203"/>
<dbReference type="KEGG" id="mka:MK1608"/>
<dbReference type="HOGENOM" id="CLU_176720_0_1_2"/>
<dbReference type="InParanoid" id="Q8TUZ3"/>
<dbReference type="OrthoDB" id="52479at2157"/>
<dbReference type="Proteomes" id="UP000001826">
    <property type="component" value="Chromosome"/>
</dbReference>
<dbReference type="GO" id="GO:0005829">
    <property type="term" value="C:cytosol"/>
    <property type="evidence" value="ECO:0007669"/>
    <property type="project" value="UniProtKB-ARBA"/>
</dbReference>
<dbReference type="GO" id="GO:1990904">
    <property type="term" value="C:ribonucleoprotein complex"/>
    <property type="evidence" value="ECO:0007669"/>
    <property type="project" value="UniProtKB-KW"/>
</dbReference>
<dbReference type="GO" id="GO:0005840">
    <property type="term" value="C:ribosome"/>
    <property type="evidence" value="ECO:0007669"/>
    <property type="project" value="UniProtKB-KW"/>
</dbReference>
<dbReference type="GO" id="GO:0003735">
    <property type="term" value="F:structural constituent of ribosome"/>
    <property type="evidence" value="ECO:0007669"/>
    <property type="project" value="InterPro"/>
</dbReference>
<dbReference type="GO" id="GO:0006412">
    <property type="term" value="P:translation"/>
    <property type="evidence" value="ECO:0007669"/>
    <property type="project" value="UniProtKB-UniRule"/>
</dbReference>
<dbReference type="Gene3D" id="1.10.60.20">
    <property type="entry name" value="Ribosomal protein S17e-like"/>
    <property type="match status" value="1"/>
</dbReference>
<dbReference type="HAMAP" id="MF_00511">
    <property type="entry name" value="Ribosomal_eS17"/>
    <property type="match status" value="1"/>
</dbReference>
<dbReference type="InterPro" id="IPR001210">
    <property type="entry name" value="Ribosomal_eS17"/>
</dbReference>
<dbReference type="InterPro" id="IPR018273">
    <property type="entry name" value="Ribosomal_eS17_CS"/>
</dbReference>
<dbReference type="InterPro" id="IPR036401">
    <property type="entry name" value="Ribosomal_eS17_sf"/>
</dbReference>
<dbReference type="NCBIfam" id="NF002242">
    <property type="entry name" value="PRK01151.1"/>
    <property type="match status" value="1"/>
</dbReference>
<dbReference type="PANTHER" id="PTHR10732">
    <property type="entry name" value="40S RIBOSOMAL PROTEIN S17"/>
    <property type="match status" value="1"/>
</dbReference>
<dbReference type="PANTHER" id="PTHR10732:SF0">
    <property type="entry name" value="40S RIBOSOMAL PROTEIN S17"/>
    <property type="match status" value="1"/>
</dbReference>
<dbReference type="Pfam" id="PF00833">
    <property type="entry name" value="Ribosomal_S17e"/>
    <property type="match status" value="1"/>
</dbReference>
<dbReference type="SUPFAM" id="SSF116820">
    <property type="entry name" value="Rps17e-like"/>
    <property type="match status" value="1"/>
</dbReference>
<dbReference type="PROSITE" id="PS00712">
    <property type="entry name" value="RIBOSOMAL_S17E"/>
    <property type="match status" value="1"/>
</dbReference>